<reference key="1">
    <citation type="journal article" date="2004" name="Nature">
        <title>Genome sequence of the Brown Norway rat yields insights into mammalian evolution.</title>
        <authorList>
            <person name="Gibbs R.A."/>
            <person name="Weinstock G.M."/>
            <person name="Metzker M.L."/>
            <person name="Muzny D.M."/>
            <person name="Sodergren E.J."/>
            <person name="Scherer S."/>
            <person name="Scott G."/>
            <person name="Steffen D."/>
            <person name="Worley K.C."/>
            <person name="Burch P.E."/>
            <person name="Okwuonu G."/>
            <person name="Hines S."/>
            <person name="Lewis L."/>
            <person name="Deramo C."/>
            <person name="Delgado O."/>
            <person name="Dugan-Rocha S."/>
            <person name="Miner G."/>
            <person name="Morgan M."/>
            <person name="Hawes A."/>
            <person name="Gill R."/>
            <person name="Holt R.A."/>
            <person name="Adams M.D."/>
            <person name="Amanatides P.G."/>
            <person name="Baden-Tillson H."/>
            <person name="Barnstead M."/>
            <person name="Chin S."/>
            <person name="Evans C.A."/>
            <person name="Ferriera S."/>
            <person name="Fosler C."/>
            <person name="Glodek A."/>
            <person name="Gu Z."/>
            <person name="Jennings D."/>
            <person name="Kraft C.L."/>
            <person name="Nguyen T."/>
            <person name="Pfannkoch C.M."/>
            <person name="Sitter C."/>
            <person name="Sutton G.G."/>
            <person name="Venter J.C."/>
            <person name="Woodage T."/>
            <person name="Smith D."/>
            <person name="Lee H.-M."/>
            <person name="Gustafson E."/>
            <person name="Cahill P."/>
            <person name="Kana A."/>
            <person name="Doucette-Stamm L."/>
            <person name="Weinstock K."/>
            <person name="Fechtel K."/>
            <person name="Weiss R.B."/>
            <person name="Dunn D.M."/>
            <person name="Green E.D."/>
            <person name="Blakesley R.W."/>
            <person name="Bouffard G.G."/>
            <person name="De Jong P.J."/>
            <person name="Osoegawa K."/>
            <person name="Zhu B."/>
            <person name="Marra M."/>
            <person name="Schein J."/>
            <person name="Bosdet I."/>
            <person name="Fjell C."/>
            <person name="Jones S."/>
            <person name="Krzywinski M."/>
            <person name="Mathewson C."/>
            <person name="Siddiqui A."/>
            <person name="Wye N."/>
            <person name="McPherson J."/>
            <person name="Zhao S."/>
            <person name="Fraser C.M."/>
            <person name="Shetty J."/>
            <person name="Shatsman S."/>
            <person name="Geer K."/>
            <person name="Chen Y."/>
            <person name="Abramzon S."/>
            <person name="Nierman W.C."/>
            <person name="Havlak P.H."/>
            <person name="Chen R."/>
            <person name="Durbin K.J."/>
            <person name="Egan A."/>
            <person name="Ren Y."/>
            <person name="Song X.-Z."/>
            <person name="Li B."/>
            <person name="Liu Y."/>
            <person name="Qin X."/>
            <person name="Cawley S."/>
            <person name="Cooney A.J."/>
            <person name="D'Souza L.M."/>
            <person name="Martin K."/>
            <person name="Wu J.Q."/>
            <person name="Gonzalez-Garay M.L."/>
            <person name="Jackson A.R."/>
            <person name="Kalafus K.J."/>
            <person name="McLeod M.P."/>
            <person name="Milosavljevic A."/>
            <person name="Virk D."/>
            <person name="Volkov A."/>
            <person name="Wheeler D.A."/>
            <person name="Zhang Z."/>
            <person name="Bailey J.A."/>
            <person name="Eichler E.E."/>
            <person name="Tuzun E."/>
            <person name="Birney E."/>
            <person name="Mongin E."/>
            <person name="Ureta-Vidal A."/>
            <person name="Woodwark C."/>
            <person name="Zdobnov E."/>
            <person name="Bork P."/>
            <person name="Suyama M."/>
            <person name="Torrents D."/>
            <person name="Alexandersson M."/>
            <person name="Trask B.J."/>
            <person name="Young J.M."/>
            <person name="Huang H."/>
            <person name="Wang H."/>
            <person name="Xing H."/>
            <person name="Daniels S."/>
            <person name="Gietzen D."/>
            <person name="Schmidt J."/>
            <person name="Stevens K."/>
            <person name="Vitt U."/>
            <person name="Wingrove J."/>
            <person name="Camara F."/>
            <person name="Mar Alba M."/>
            <person name="Abril J.F."/>
            <person name="Guigo R."/>
            <person name="Smit A."/>
            <person name="Dubchak I."/>
            <person name="Rubin E.M."/>
            <person name="Couronne O."/>
            <person name="Poliakov A."/>
            <person name="Huebner N."/>
            <person name="Ganten D."/>
            <person name="Goesele C."/>
            <person name="Hummel O."/>
            <person name="Kreitler T."/>
            <person name="Lee Y.-A."/>
            <person name="Monti J."/>
            <person name="Schulz H."/>
            <person name="Zimdahl H."/>
            <person name="Himmelbauer H."/>
            <person name="Lehrach H."/>
            <person name="Jacob H.J."/>
            <person name="Bromberg S."/>
            <person name="Gullings-Handley J."/>
            <person name="Jensen-Seaman M.I."/>
            <person name="Kwitek A.E."/>
            <person name="Lazar J."/>
            <person name="Pasko D."/>
            <person name="Tonellato P.J."/>
            <person name="Twigger S."/>
            <person name="Ponting C.P."/>
            <person name="Duarte J.M."/>
            <person name="Rice S."/>
            <person name="Goodstadt L."/>
            <person name="Beatson S.A."/>
            <person name="Emes R.D."/>
            <person name="Winter E.E."/>
            <person name="Webber C."/>
            <person name="Brandt P."/>
            <person name="Nyakatura G."/>
            <person name="Adetobi M."/>
            <person name="Chiaromonte F."/>
            <person name="Elnitski L."/>
            <person name="Eswara P."/>
            <person name="Hardison R.C."/>
            <person name="Hou M."/>
            <person name="Kolbe D."/>
            <person name="Makova K."/>
            <person name="Miller W."/>
            <person name="Nekrutenko A."/>
            <person name="Riemer C."/>
            <person name="Schwartz S."/>
            <person name="Taylor J."/>
            <person name="Yang S."/>
            <person name="Zhang Y."/>
            <person name="Lindpaintner K."/>
            <person name="Andrews T.D."/>
            <person name="Caccamo M."/>
            <person name="Clamp M."/>
            <person name="Clarke L."/>
            <person name="Curwen V."/>
            <person name="Durbin R.M."/>
            <person name="Eyras E."/>
            <person name="Searle S.M."/>
            <person name="Cooper G.M."/>
            <person name="Batzoglou S."/>
            <person name="Brudno M."/>
            <person name="Sidow A."/>
            <person name="Stone E.A."/>
            <person name="Payseur B.A."/>
            <person name="Bourque G."/>
            <person name="Lopez-Otin C."/>
            <person name="Puente X.S."/>
            <person name="Chakrabarti K."/>
            <person name="Chatterji S."/>
            <person name="Dewey C."/>
            <person name="Pachter L."/>
            <person name="Bray N."/>
            <person name="Yap V.B."/>
            <person name="Caspi A."/>
            <person name="Tesler G."/>
            <person name="Pevzner P.A."/>
            <person name="Haussler D."/>
            <person name="Roskin K.M."/>
            <person name="Baertsch R."/>
            <person name="Clawson H."/>
            <person name="Furey T.S."/>
            <person name="Hinrichs A.S."/>
            <person name="Karolchik D."/>
            <person name="Kent W.J."/>
            <person name="Rosenbloom K.R."/>
            <person name="Trumbower H."/>
            <person name="Weirauch M."/>
            <person name="Cooper D.N."/>
            <person name="Stenson P.D."/>
            <person name="Ma B."/>
            <person name="Brent M."/>
            <person name="Arumugam M."/>
            <person name="Shteynberg D."/>
            <person name="Copley R.R."/>
            <person name="Taylor M.S."/>
            <person name="Riethman H."/>
            <person name="Mudunuri U."/>
            <person name="Peterson J."/>
            <person name="Guyer M."/>
            <person name="Felsenfeld A."/>
            <person name="Old S."/>
            <person name="Mockrin S."/>
            <person name="Collins F.S."/>
        </authorList>
    </citation>
    <scope>NUCLEOTIDE SEQUENCE [LARGE SCALE GENOMIC DNA]</scope>
    <source>
        <strain>Brown Norway</strain>
    </source>
</reference>
<reference key="2">
    <citation type="journal article" date="2007" name="J. Biol. Chem.">
        <title>TOM1L1 is a Lyn substrate involved in FcepsilonRI signaling in mast cells.</title>
        <authorList>
            <person name="Zhang J."/>
            <person name="Suzuki K."/>
            <person name="Hitomi T."/>
            <person name="Siraganian R.P."/>
        </authorList>
    </citation>
    <scope>INTERACTION WITH LYN</scope>
    <scope>SUBCELLULAR LOCATION</scope>
    <scope>PHOSPHORYLATION BY LYN</scope>
</reference>
<reference key="3">
    <citation type="journal article" date="2012" name="Nat. Commun.">
        <title>Quantitative maps of protein phosphorylation sites across 14 different rat organs and tissues.</title>
        <authorList>
            <person name="Lundby A."/>
            <person name="Secher A."/>
            <person name="Lage K."/>
            <person name="Nordsborg N.B."/>
            <person name="Dmytriyev A."/>
            <person name="Lundby C."/>
            <person name="Olsen J.V."/>
        </authorList>
    </citation>
    <scope>IDENTIFICATION BY MASS SPECTROMETRY [LARGE SCALE ANALYSIS]</scope>
</reference>
<keyword id="KW-0963">Cytoplasm</keyword>
<keyword id="KW-0967">Endosome</keyword>
<keyword id="KW-0333">Golgi apparatus</keyword>
<keyword id="KW-0472">Membrane</keyword>
<keyword id="KW-0597">Phosphoprotein</keyword>
<keyword id="KW-0653">Protein transport</keyword>
<keyword id="KW-1185">Reference proteome</keyword>
<keyword id="KW-0729">SH3-binding</keyword>
<keyword id="KW-0813">Transport</keyword>
<organism>
    <name type="scientific">Rattus norvegicus</name>
    <name type="common">Rat</name>
    <dbReference type="NCBI Taxonomy" id="10116"/>
    <lineage>
        <taxon>Eukaryota</taxon>
        <taxon>Metazoa</taxon>
        <taxon>Chordata</taxon>
        <taxon>Craniata</taxon>
        <taxon>Vertebrata</taxon>
        <taxon>Euteleostomi</taxon>
        <taxon>Mammalia</taxon>
        <taxon>Eutheria</taxon>
        <taxon>Euarchontoglires</taxon>
        <taxon>Glires</taxon>
        <taxon>Rodentia</taxon>
        <taxon>Myomorpha</taxon>
        <taxon>Muroidea</taxon>
        <taxon>Muridae</taxon>
        <taxon>Murinae</taxon>
        <taxon>Rattus</taxon>
    </lineage>
</organism>
<sequence length="475" mass="52551">MAFGKSHRDPYATSLGHLIEKATFAGVQTEDWGQFMHICDIINTTQDGPKDAVKALKKRISKNYNHKEIQLSLSLIDMCMQNCGPSFQSLIVKKEFVKDTLVKLLNPRYTLPLETQNRILSFIKMWSQGFPGGVDVSEVKEVYLDLLKKGVQFPPLDGEPETKQEAGQISPSRPTSVPTAPALSSIIAPKNPTISLVPEQIGKLHSELDMVKMNVKVMTAILMENTPGSENHEDIELLRKLYKTGREMQERIMDLLVVVENEDVTVELIQVNEDLNNAILGYERFTRNQQRLLEQKRNPTEANQTSSEPSAPSCDLLNLGPVAPVPVSSEGPLNSVNAQLSGLNVSSQSPVITNNLYPSLQPQMDLLASEDTEVPTLFPQRTSQNLASSHTYDNFPDHSSSVLLQPVSLHTAPAAPSSQRLPPLPSNHPVLKNSALQPPSYYEVMEFDPLAPTTEAIYEEIDASHKKGAQSHSEC</sequence>
<proteinExistence type="evidence at protein level"/>
<gene>
    <name type="primary">Tom1l1</name>
    <name type="synonym">Srcasm</name>
</gene>
<name>TM1L1_RAT</name>
<feature type="chain" id="PRO_0000414590" description="TOM1-like protein 1">
    <location>
        <begin position="1"/>
        <end position="475"/>
    </location>
</feature>
<feature type="domain" description="VHS" evidence="4">
    <location>
        <begin position="22"/>
        <end position="154"/>
    </location>
</feature>
<feature type="domain" description="GAT" evidence="5">
    <location>
        <begin position="199"/>
        <end position="287"/>
    </location>
</feature>
<feature type="region of interest" description="Disordered" evidence="6">
    <location>
        <begin position="155"/>
        <end position="175"/>
    </location>
</feature>
<feature type="region of interest" description="Disordered" evidence="6">
    <location>
        <begin position="296"/>
        <end position="317"/>
    </location>
</feature>
<feature type="region of interest" description="Interaction with GRB2" evidence="1">
    <location>
        <begin position="392"/>
        <end position="395"/>
    </location>
</feature>
<feature type="region of interest" description="Interaction with PIK3R1" evidence="1">
    <location>
        <begin position="442"/>
        <end position="445"/>
    </location>
</feature>
<feature type="short sequence motif" description="SH3-binding" evidence="1">
    <location>
        <begin position="421"/>
        <end position="425"/>
    </location>
</feature>
<feature type="short sequence motif" description="SH2-binding" evidence="1">
    <location>
        <begin position="458"/>
        <end position="461"/>
    </location>
</feature>
<feature type="compositionally biased region" description="Polar residues" evidence="6">
    <location>
        <begin position="165"/>
        <end position="175"/>
    </location>
</feature>
<feature type="compositionally biased region" description="Polar residues" evidence="6">
    <location>
        <begin position="300"/>
        <end position="310"/>
    </location>
</feature>
<feature type="modified residue" description="Phosphoserine" evidence="3">
    <location>
        <position position="170"/>
    </location>
</feature>
<feature type="modified residue" description="Phosphoserine" evidence="2">
    <location>
        <position position="313"/>
    </location>
</feature>
<feature type="modified residue" description="Phosphotyrosine" evidence="3">
    <location>
        <position position="458"/>
    </location>
</feature>
<evidence type="ECO:0000250" key="1"/>
<evidence type="ECO:0000250" key="2">
    <source>
        <dbReference type="UniProtKB" id="O75674"/>
    </source>
</evidence>
<evidence type="ECO:0000250" key="3">
    <source>
        <dbReference type="UniProtKB" id="Q923U0"/>
    </source>
</evidence>
<evidence type="ECO:0000255" key="4">
    <source>
        <dbReference type="PROSITE-ProRule" id="PRU00218"/>
    </source>
</evidence>
<evidence type="ECO:0000255" key="5">
    <source>
        <dbReference type="PROSITE-ProRule" id="PRU00373"/>
    </source>
</evidence>
<evidence type="ECO:0000256" key="6">
    <source>
        <dbReference type="SAM" id="MobiDB-lite"/>
    </source>
</evidence>
<evidence type="ECO:0000269" key="7">
    <source>
    </source>
</evidence>
<evidence type="ECO:0000305" key="8"/>
<comment type="function">
    <text evidence="1">Probable adapter protein involved in signaling pathways. Interacts with the SH2 and SH3 domains of various signaling proteins when it is phosphorylated. May promote FYN activation, possibly by disrupting intramolecular SH3-dependent interactions (By similarity).</text>
</comment>
<comment type="subunit">
    <text evidence="1 7">Interacts with the SH2 and SH3 domains of FYN when phosphorylated. Also interacts with GRB2 and PIK3R1 when phosphorylated (By similarity). Interacts with LYN.</text>
</comment>
<comment type="subcellular location">
    <subcellularLocation>
        <location evidence="1">Golgi apparatus</location>
        <location evidence="1">Golgi stack</location>
    </subcellularLocation>
    <subcellularLocation>
        <location evidence="8">Endosome membrane</location>
    </subcellularLocation>
    <subcellularLocation>
        <location evidence="7">Cytoplasm</location>
    </subcellularLocation>
    <subcellularLocation>
        <location evidence="7">Membrane</location>
        <topology evidence="7">Peripheral membrane protein</topology>
        <orientation evidence="7">Cytoplasmic side</orientation>
    </subcellularLocation>
    <text>A small proportion is membrane-associated.</text>
</comment>
<comment type="PTM">
    <text evidence="7">Phosphorylated on tyrosines by FYN and LYN.</text>
</comment>
<comment type="similarity">
    <text evidence="8">Belongs to the TOM1 family.</text>
</comment>
<accession>F1LM81</accession>
<protein>
    <recommendedName>
        <fullName>TOM1-like protein 1</fullName>
    </recommendedName>
    <alternativeName>
        <fullName>Src-activating and signaling molecule protein</fullName>
    </alternativeName>
    <alternativeName>
        <fullName>Target of Myb-like protein 1</fullName>
    </alternativeName>
</protein>
<dbReference type="EMBL" id="AABR03074187">
    <property type="status" value="NOT_ANNOTATED_CDS"/>
    <property type="molecule type" value="Genomic_DNA"/>
</dbReference>
<dbReference type="EMBL" id="AABR03074211">
    <property type="status" value="NOT_ANNOTATED_CDS"/>
    <property type="molecule type" value="Genomic_DNA"/>
</dbReference>
<dbReference type="EMBL" id="AABR03076121">
    <property type="status" value="NOT_ANNOTATED_CDS"/>
    <property type="molecule type" value="Genomic_DNA"/>
</dbReference>
<dbReference type="EMBL" id="AABR03076904">
    <property type="status" value="NOT_ANNOTATED_CDS"/>
    <property type="molecule type" value="Genomic_DNA"/>
</dbReference>
<dbReference type="SMR" id="F1LM81"/>
<dbReference type="FunCoup" id="F1LM81">
    <property type="interactions" value="451"/>
</dbReference>
<dbReference type="STRING" id="10116.ENSRNOP00000003369"/>
<dbReference type="iPTMnet" id="F1LM81"/>
<dbReference type="PhosphoSitePlus" id="F1LM81"/>
<dbReference type="jPOST" id="F1LM81"/>
<dbReference type="PaxDb" id="10116-ENSRNOP00000003369"/>
<dbReference type="AGR" id="RGD:1562626"/>
<dbReference type="RGD" id="1562626">
    <property type="gene designation" value="Tom1l1"/>
</dbReference>
<dbReference type="eggNOG" id="KOG1087">
    <property type="taxonomic scope" value="Eukaryota"/>
</dbReference>
<dbReference type="HOGENOM" id="CLU_043812_0_0_1"/>
<dbReference type="InParanoid" id="F1LM81"/>
<dbReference type="TreeFam" id="TF314105"/>
<dbReference type="PRO" id="PR:F1LM81"/>
<dbReference type="Proteomes" id="UP000002494">
    <property type="component" value="Unplaced"/>
</dbReference>
<dbReference type="GO" id="GO:0005737">
    <property type="term" value="C:cytoplasm"/>
    <property type="evidence" value="ECO:0000266"/>
    <property type="project" value="RGD"/>
</dbReference>
<dbReference type="GO" id="GO:0005829">
    <property type="term" value="C:cytosol"/>
    <property type="evidence" value="ECO:0000266"/>
    <property type="project" value="RGD"/>
</dbReference>
<dbReference type="GO" id="GO:0005768">
    <property type="term" value="C:endosome"/>
    <property type="evidence" value="ECO:0000266"/>
    <property type="project" value="RGD"/>
</dbReference>
<dbReference type="GO" id="GO:0010008">
    <property type="term" value="C:endosome membrane"/>
    <property type="evidence" value="ECO:0007669"/>
    <property type="project" value="UniProtKB-SubCell"/>
</dbReference>
<dbReference type="GO" id="GO:0005795">
    <property type="term" value="C:Golgi stack"/>
    <property type="evidence" value="ECO:0007669"/>
    <property type="project" value="UniProtKB-SubCell"/>
</dbReference>
<dbReference type="GO" id="GO:0016020">
    <property type="term" value="C:membrane"/>
    <property type="evidence" value="ECO:0000318"/>
    <property type="project" value="GO_Central"/>
</dbReference>
<dbReference type="GO" id="GO:0030276">
    <property type="term" value="F:clathrin binding"/>
    <property type="evidence" value="ECO:0000266"/>
    <property type="project" value="RGD"/>
</dbReference>
<dbReference type="GO" id="GO:0035091">
    <property type="term" value="F:phosphatidylinositol binding"/>
    <property type="evidence" value="ECO:0007669"/>
    <property type="project" value="InterPro"/>
</dbReference>
<dbReference type="GO" id="GO:0030295">
    <property type="term" value="F:protein kinase activator activity"/>
    <property type="evidence" value="ECO:0000266"/>
    <property type="project" value="RGD"/>
</dbReference>
<dbReference type="GO" id="GO:0019901">
    <property type="term" value="F:protein kinase binding"/>
    <property type="evidence" value="ECO:0000266"/>
    <property type="project" value="RGD"/>
</dbReference>
<dbReference type="GO" id="GO:0017124">
    <property type="term" value="F:SH3 domain binding"/>
    <property type="evidence" value="ECO:0007669"/>
    <property type="project" value="UniProtKB-KW"/>
</dbReference>
<dbReference type="GO" id="GO:0043130">
    <property type="term" value="F:ubiquitin binding"/>
    <property type="evidence" value="ECO:0007669"/>
    <property type="project" value="InterPro"/>
</dbReference>
<dbReference type="GO" id="GO:0045839">
    <property type="term" value="P:negative regulation of mitotic nuclear division"/>
    <property type="evidence" value="ECO:0000266"/>
    <property type="project" value="RGD"/>
</dbReference>
<dbReference type="GO" id="GO:0015031">
    <property type="term" value="P:protein transport"/>
    <property type="evidence" value="ECO:0007669"/>
    <property type="project" value="UniProtKB-KW"/>
</dbReference>
<dbReference type="GO" id="GO:0007165">
    <property type="term" value="P:signal transduction"/>
    <property type="evidence" value="ECO:0000266"/>
    <property type="project" value="RGD"/>
</dbReference>
<dbReference type="CDD" id="cd14237">
    <property type="entry name" value="GAT_TM1L1"/>
    <property type="match status" value="1"/>
</dbReference>
<dbReference type="CDD" id="cd16997">
    <property type="entry name" value="VHS_Tom1L1"/>
    <property type="match status" value="1"/>
</dbReference>
<dbReference type="FunFam" id="1.25.40.90:FF:000003">
    <property type="entry name" value="TOM1-like protein 2 isoform X1"/>
    <property type="match status" value="1"/>
</dbReference>
<dbReference type="Gene3D" id="1.20.58.160">
    <property type="match status" value="1"/>
</dbReference>
<dbReference type="Gene3D" id="1.25.40.90">
    <property type="match status" value="1"/>
</dbReference>
<dbReference type="InterPro" id="IPR008942">
    <property type="entry name" value="ENTH_VHS"/>
</dbReference>
<dbReference type="InterPro" id="IPR004152">
    <property type="entry name" value="GAT_dom"/>
</dbReference>
<dbReference type="InterPro" id="IPR038425">
    <property type="entry name" value="GAT_sf"/>
</dbReference>
<dbReference type="InterPro" id="IPR014645">
    <property type="entry name" value="TOM1"/>
</dbReference>
<dbReference type="InterPro" id="IPR027428">
    <property type="entry name" value="TOM1L1_GAT_dom"/>
</dbReference>
<dbReference type="InterPro" id="IPR047013">
    <property type="entry name" value="TOM1L1_VHS_dom"/>
</dbReference>
<dbReference type="InterPro" id="IPR002014">
    <property type="entry name" value="VHS_dom"/>
</dbReference>
<dbReference type="PANTHER" id="PTHR13856:SF28">
    <property type="entry name" value="TOM1-LIKE PROTEIN 1"/>
    <property type="match status" value="1"/>
</dbReference>
<dbReference type="PANTHER" id="PTHR13856">
    <property type="entry name" value="VHS DOMAIN CONTAINING PROTEIN FAMILY"/>
    <property type="match status" value="1"/>
</dbReference>
<dbReference type="Pfam" id="PF03127">
    <property type="entry name" value="GAT"/>
    <property type="match status" value="1"/>
</dbReference>
<dbReference type="Pfam" id="PF00790">
    <property type="entry name" value="VHS"/>
    <property type="match status" value="1"/>
</dbReference>
<dbReference type="PIRSF" id="PIRSF036948">
    <property type="entry name" value="TOM1"/>
    <property type="match status" value="1"/>
</dbReference>
<dbReference type="SMART" id="SM00288">
    <property type="entry name" value="VHS"/>
    <property type="match status" value="1"/>
</dbReference>
<dbReference type="SUPFAM" id="SSF48464">
    <property type="entry name" value="ENTH/VHS domain"/>
    <property type="match status" value="1"/>
</dbReference>
<dbReference type="SUPFAM" id="SSF89009">
    <property type="entry name" value="GAT-like domain"/>
    <property type="match status" value="1"/>
</dbReference>
<dbReference type="PROSITE" id="PS50909">
    <property type="entry name" value="GAT"/>
    <property type="match status" value="1"/>
</dbReference>
<dbReference type="PROSITE" id="PS50179">
    <property type="entry name" value="VHS"/>
    <property type="match status" value="1"/>
</dbReference>